<feature type="chain" id="PRO_0000143925" description="Uridylate kinase">
    <location>
        <begin position="1"/>
        <end position="225"/>
    </location>
</feature>
<feature type="binding site" evidence="1">
    <location>
        <begin position="9"/>
        <end position="10"/>
    </location>
    <ligand>
        <name>ATP</name>
        <dbReference type="ChEBI" id="CHEBI:30616"/>
    </ligand>
</feature>
<feature type="binding site" evidence="1">
    <location>
        <position position="44"/>
    </location>
    <ligand>
        <name>UMP</name>
        <dbReference type="ChEBI" id="CHEBI:57865"/>
    </ligand>
</feature>
<feature type="binding site" evidence="1">
    <location>
        <position position="45"/>
    </location>
    <ligand>
        <name>ATP</name>
        <dbReference type="ChEBI" id="CHEBI:30616"/>
    </ligand>
</feature>
<feature type="binding site" evidence="1">
    <location>
        <position position="49"/>
    </location>
    <ligand>
        <name>ATP</name>
        <dbReference type="ChEBI" id="CHEBI:30616"/>
    </ligand>
</feature>
<feature type="binding site" evidence="1">
    <location>
        <position position="66"/>
    </location>
    <ligand>
        <name>UMP</name>
        <dbReference type="ChEBI" id="CHEBI:57865"/>
    </ligand>
</feature>
<feature type="binding site" evidence="1">
    <location>
        <begin position="114"/>
        <end position="120"/>
    </location>
    <ligand>
        <name>UMP</name>
        <dbReference type="ChEBI" id="CHEBI:57865"/>
    </ligand>
</feature>
<feature type="binding site" evidence="1">
    <location>
        <position position="140"/>
    </location>
    <ligand>
        <name>ATP</name>
        <dbReference type="ChEBI" id="CHEBI:30616"/>
    </ligand>
</feature>
<feature type="binding site" evidence="1">
    <location>
        <position position="141"/>
    </location>
    <ligand>
        <name>ATP</name>
        <dbReference type="ChEBI" id="CHEBI:30616"/>
    </ligand>
</feature>
<feature type="binding site" evidence="1">
    <location>
        <position position="146"/>
    </location>
    <ligand>
        <name>ATP</name>
        <dbReference type="ChEBI" id="CHEBI:30616"/>
    </ligand>
</feature>
<feature type="binding site" evidence="1">
    <location>
        <position position="149"/>
    </location>
    <ligand>
        <name>ATP</name>
        <dbReference type="ChEBI" id="CHEBI:30616"/>
    </ligand>
</feature>
<reference key="1">
    <citation type="journal article" date="2005" name="Genome Res.">
        <title>Complete genome sequence of the hyperthermophilic archaeon Thermococcus kodakaraensis KOD1 and comparison with Pyrococcus genomes.</title>
        <authorList>
            <person name="Fukui T."/>
            <person name="Atomi H."/>
            <person name="Kanai T."/>
            <person name="Matsumi R."/>
            <person name="Fujiwara S."/>
            <person name="Imanaka T."/>
        </authorList>
    </citation>
    <scope>NUCLEOTIDE SEQUENCE [LARGE SCALE GENOMIC DNA]</scope>
    <source>
        <strain>ATCC BAA-918 / JCM 12380 / KOD1</strain>
    </source>
</reference>
<protein>
    <recommendedName>
        <fullName evidence="1">Uridylate kinase</fullName>
        <shortName evidence="1">UK</shortName>
        <ecNumber evidence="1">2.7.4.22</ecNumber>
    </recommendedName>
    <alternativeName>
        <fullName evidence="1">Uridine monophosphate kinase</fullName>
        <shortName evidence="1">UMP kinase</shortName>
        <shortName evidence="1">UMPK</shortName>
    </alternativeName>
</protein>
<sequence length="225" mass="24589">MRIVFDIGGSVLVPEDPDIDFIKAIAYELVKISEDHEVAVVVGGGKVARKYIQAAKEFTLNETFKDYIGIHITRANAMLLIAALGEKAYPFVVQDFRKAWEVIQLKKIPIMGGTHPGHTTDAVAALLAEYLQADLLVVVTNVDGVYDSDPKKNPNAKKLDRITVDQLVEIAMQEESKAGGSGVVDALAAKFIQRGKIKTYIVGKKDAYHLFDVIKGKHSGTVVEP</sequence>
<organism>
    <name type="scientific">Thermococcus kodakarensis (strain ATCC BAA-918 / JCM 12380 / KOD1)</name>
    <name type="common">Pyrococcus kodakaraensis (strain KOD1)</name>
    <dbReference type="NCBI Taxonomy" id="69014"/>
    <lineage>
        <taxon>Archaea</taxon>
        <taxon>Methanobacteriati</taxon>
        <taxon>Methanobacteriota</taxon>
        <taxon>Thermococci</taxon>
        <taxon>Thermococcales</taxon>
        <taxon>Thermococcaceae</taxon>
        <taxon>Thermococcus</taxon>
    </lineage>
</organism>
<accession>Q5JFZ7</accession>
<evidence type="ECO:0000255" key="1">
    <source>
        <dbReference type="HAMAP-Rule" id="MF_01220"/>
    </source>
</evidence>
<proteinExistence type="inferred from homology"/>
<comment type="function">
    <text evidence="1">Catalyzes the reversible phosphorylation of UMP to UDP.</text>
</comment>
<comment type="catalytic activity">
    <reaction evidence="1">
        <text>UMP + ATP = UDP + ADP</text>
        <dbReference type="Rhea" id="RHEA:24400"/>
        <dbReference type="ChEBI" id="CHEBI:30616"/>
        <dbReference type="ChEBI" id="CHEBI:57865"/>
        <dbReference type="ChEBI" id="CHEBI:58223"/>
        <dbReference type="ChEBI" id="CHEBI:456216"/>
        <dbReference type="EC" id="2.7.4.22"/>
    </reaction>
</comment>
<comment type="activity regulation">
    <text evidence="1">Inhibited by UTP.</text>
</comment>
<comment type="pathway">
    <text evidence="1">Pyrimidine metabolism; CTP biosynthesis via de novo pathway; UDP from UMP (UMPK route): step 1/1.</text>
</comment>
<comment type="subunit">
    <text evidence="1">Homohexamer.</text>
</comment>
<comment type="subcellular location">
    <subcellularLocation>
        <location evidence="1">Cytoplasm</location>
    </subcellularLocation>
</comment>
<comment type="similarity">
    <text evidence="1">Belongs to the UMP kinase family.</text>
</comment>
<keyword id="KW-0067">ATP-binding</keyword>
<keyword id="KW-0963">Cytoplasm</keyword>
<keyword id="KW-0418">Kinase</keyword>
<keyword id="KW-0547">Nucleotide-binding</keyword>
<keyword id="KW-0665">Pyrimidine biosynthesis</keyword>
<keyword id="KW-1185">Reference proteome</keyword>
<keyword id="KW-0808">Transferase</keyword>
<gene>
    <name evidence="1" type="primary">pyrH</name>
    <name type="ordered locus">TK0305</name>
</gene>
<name>PYRH_THEKO</name>
<dbReference type="EC" id="2.7.4.22" evidence="1"/>
<dbReference type="EMBL" id="AP006878">
    <property type="protein sequence ID" value="BAD84494.1"/>
    <property type="molecule type" value="Genomic_DNA"/>
</dbReference>
<dbReference type="RefSeq" id="WP_011249260.1">
    <property type="nucleotide sequence ID" value="NC_006624.1"/>
</dbReference>
<dbReference type="SMR" id="Q5JFZ7"/>
<dbReference type="FunCoup" id="Q5JFZ7">
    <property type="interactions" value="109"/>
</dbReference>
<dbReference type="IntAct" id="Q5JFZ7">
    <property type="interactions" value="1"/>
</dbReference>
<dbReference type="MINT" id="Q5JFZ7"/>
<dbReference type="STRING" id="69014.TK0305"/>
<dbReference type="EnsemblBacteria" id="BAD84494">
    <property type="protein sequence ID" value="BAD84494"/>
    <property type="gene ID" value="TK0305"/>
</dbReference>
<dbReference type="GeneID" id="78446806"/>
<dbReference type="KEGG" id="tko:TK0305"/>
<dbReference type="PATRIC" id="fig|69014.16.peg.304"/>
<dbReference type="eggNOG" id="arCOG00858">
    <property type="taxonomic scope" value="Archaea"/>
</dbReference>
<dbReference type="HOGENOM" id="CLU_079546_0_0_2"/>
<dbReference type="InParanoid" id="Q5JFZ7"/>
<dbReference type="OrthoDB" id="372251at2157"/>
<dbReference type="PhylomeDB" id="Q5JFZ7"/>
<dbReference type="UniPathway" id="UPA00159">
    <property type="reaction ID" value="UER00275"/>
</dbReference>
<dbReference type="Proteomes" id="UP000000536">
    <property type="component" value="Chromosome"/>
</dbReference>
<dbReference type="GO" id="GO:0005737">
    <property type="term" value="C:cytoplasm"/>
    <property type="evidence" value="ECO:0007669"/>
    <property type="project" value="UniProtKB-SubCell"/>
</dbReference>
<dbReference type="GO" id="GO:0005524">
    <property type="term" value="F:ATP binding"/>
    <property type="evidence" value="ECO:0007669"/>
    <property type="project" value="UniProtKB-KW"/>
</dbReference>
<dbReference type="GO" id="GO:0033862">
    <property type="term" value="F:UMP kinase activity"/>
    <property type="evidence" value="ECO:0000318"/>
    <property type="project" value="GO_Central"/>
</dbReference>
<dbReference type="GO" id="GO:0044210">
    <property type="term" value="P:'de novo' CTP biosynthetic process"/>
    <property type="evidence" value="ECO:0007669"/>
    <property type="project" value="UniProtKB-UniRule"/>
</dbReference>
<dbReference type="GO" id="GO:0006225">
    <property type="term" value="P:UDP biosynthetic process"/>
    <property type="evidence" value="ECO:0000318"/>
    <property type="project" value="GO_Central"/>
</dbReference>
<dbReference type="CDD" id="cd04253">
    <property type="entry name" value="AAK_UMPK-PyrH-Pf"/>
    <property type="match status" value="1"/>
</dbReference>
<dbReference type="FunFam" id="3.40.1160.10:FF:000030">
    <property type="entry name" value="Uridylate kinase"/>
    <property type="match status" value="1"/>
</dbReference>
<dbReference type="Gene3D" id="3.40.1160.10">
    <property type="entry name" value="Acetylglutamate kinase-like"/>
    <property type="match status" value="1"/>
</dbReference>
<dbReference type="HAMAP" id="MF_01220_A">
    <property type="entry name" value="PyrH_A"/>
    <property type="match status" value="1"/>
</dbReference>
<dbReference type="InterPro" id="IPR036393">
    <property type="entry name" value="AceGlu_kinase-like_sf"/>
</dbReference>
<dbReference type="InterPro" id="IPR001048">
    <property type="entry name" value="Asp/Glu/Uridylate_kinase"/>
</dbReference>
<dbReference type="InterPro" id="IPR011817">
    <property type="entry name" value="Uridylate_kinase"/>
</dbReference>
<dbReference type="InterPro" id="IPR011818">
    <property type="entry name" value="Uridylate_kinase_arch/spir"/>
</dbReference>
<dbReference type="NCBIfam" id="TIGR02076">
    <property type="entry name" value="pyrH_arch"/>
    <property type="match status" value="1"/>
</dbReference>
<dbReference type="PANTHER" id="PTHR42833">
    <property type="entry name" value="URIDYLATE KINASE"/>
    <property type="match status" value="1"/>
</dbReference>
<dbReference type="PANTHER" id="PTHR42833:SF4">
    <property type="entry name" value="URIDYLATE KINASE PUMPKIN, CHLOROPLASTIC"/>
    <property type="match status" value="1"/>
</dbReference>
<dbReference type="Pfam" id="PF00696">
    <property type="entry name" value="AA_kinase"/>
    <property type="match status" value="1"/>
</dbReference>
<dbReference type="PIRSF" id="PIRSF005650">
    <property type="entry name" value="Uridylate_kin"/>
    <property type="match status" value="1"/>
</dbReference>
<dbReference type="SUPFAM" id="SSF53633">
    <property type="entry name" value="Carbamate kinase-like"/>
    <property type="match status" value="1"/>
</dbReference>